<keyword id="KW-0963">Cytoplasm</keyword>
<keyword id="KW-0274">FAD</keyword>
<keyword id="KW-0285">Flavoprotein</keyword>
<keyword id="KW-0489">Methyltransferase</keyword>
<keyword id="KW-0520">NAD</keyword>
<keyword id="KW-0521">NADP</keyword>
<keyword id="KW-1185">Reference proteome</keyword>
<keyword id="KW-0808">Transferase</keyword>
<keyword id="KW-0819">tRNA processing</keyword>
<gene>
    <name evidence="1" type="primary">trmFO</name>
    <name type="ordered locus">SynRCC307_1541</name>
</gene>
<dbReference type="EC" id="2.1.1.74" evidence="1"/>
<dbReference type="EMBL" id="CT978603">
    <property type="protein sequence ID" value="CAK28444.1"/>
    <property type="molecule type" value="Genomic_DNA"/>
</dbReference>
<dbReference type="SMR" id="A5GU85"/>
<dbReference type="STRING" id="316278.SynRCC307_1541"/>
<dbReference type="KEGG" id="syr:SynRCC307_1541"/>
<dbReference type="eggNOG" id="COG1206">
    <property type="taxonomic scope" value="Bacteria"/>
</dbReference>
<dbReference type="HOGENOM" id="CLU_033057_1_0_3"/>
<dbReference type="OrthoDB" id="9803114at2"/>
<dbReference type="Proteomes" id="UP000001115">
    <property type="component" value="Chromosome"/>
</dbReference>
<dbReference type="GO" id="GO:0005829">
    <property type="term" value="C:cytosol"/>
    <property type="evidence" value="ECO:0007669"/>
    <property type="project" value="TreeGrafter"/>
</dbReference>
<dbReference type="GO" id="GO:0050660">
    <property type="term" value="F:flavin adenine dinucleotide binding"/>
    <property type="evidence" value="ECO:0007669"/>
    <property type="project" value="UniProtKB-UniRule"/>
</dbReference>
<dbReference type="GO" id="GO:0047151">
    <property type="term" value="F:tRNA (uracil(54)-C5)-methyltransferase activity, 5,10-methylenetetrahydrofolate-dependent"/>
    <property type="evidence" value="ECO:0007669"/>
    <property type="project" value="UniProtKB-UniRule"/>
</dbReference>
<dbReference type="GO" id="GO:0030488">
    <property type="term" value="P:tRNA methylation"/>
    <property type="evidence" value="ECO:0007669"/>
    <property type="project" value="TreeGrafter"/>
</dbReference>
<dbReference type="GO" id="GO:0002098">
    <property type="term" value="P:tRNA wobble uridine modification"/>
    <property type="evidence" value="ECO:0007669"/>
    <property type="project" value="TreeGrafter"/>
</dbReference>
<dbReference type="Gene3D" id="3.50.50.60">
    <property type="entry name" value="FAD/NAD(P)-binding domain"/>
    <property type="match status" value="2"/>
</dbReference>
<dbReference type="HAMAP" id="MF_01037">
    <property type="entry name" value="TrmFO"/>
    <property type="match status" value="1"/>
</dbReference>
<dbReference type="InterPro" id="IPR036188">
    <property type="entry name" value="FAD/NAD-bd_sf"/>
</dbReference>
<dbReference type="InterPro" id="IPR002218">
    <property type="entry name" value="MnmG-rel"/>
</dbReference>
<dbReference type="InterPro" id="IPR040131">
    <property type="entry name" value="MnmG_N"/>
</dbReference>
<dbReference type="InterPro" id="IPR004417">
    <property type="entry name" value="TrmFO"/>
</dbReference>
<dbReference type="NCBIfam" id="TIGR00137">
    <property type="entry name" value="gid_trmFO"/>
    <property type="match status" value="1"/>
</dbReference>
<dbReference type="NCBIfam" id="NF003739">
    <property type="entry name" value="PRK05335.1"/>
    <property type="match status" value="1"/>
</dbReference>
<dbReference type="PANTHER" id="PTHR11806">
    <property type="entry name" value="GLUCOSE INHIBITED DIVISION PROTEIN A"/>
    <property type="match status" value="1"/>
</dbReference>
<dbReference type="PANTHER" id="PTHR11806:SF2">
    <property type="entry name" value="METHYLENETETRAHYDROFOLATE--TRNA-(URACIL-5-)-METHYLTRANSFERASE TRMFO"/>
    <property type="match status" value="1"/>
</dbReference>
<dbReference type="Pfam" id="PF01134">
    <property type="entry name" value="GIDA"/>
    <property type="match status" value="1"/>
</dbReference>
<dbReference type="PRINTS" id="PR00411">
    <property type="entry name" value="PNDRDTASEI"/>
</dbReference>
<dbReference type="SUPFAM" id="SSF51905">
    <property type="entry name" value="FAD/NAD(P)-binding domain"/>
    <property type="match status" value="1"/>
</dbReference>
<protein>
    <recommendedName>
        <fullName evidence="1">Methylenetetrahydrofolate--tRNA-(uracil-5-)-methyltransferase TrmFO</fullName>
        <ecNumber evidence="1">2.1.1.74</ecNumber>
    </recommendedName>
    <alternativeName>
        <fullName evidence="1">Folate-dependent tRNA (uracil-5-)-methyltransferase</fullName>
    </alternativeName>
    <alternativeName>
        <fullName evidence="1">Folate-dependent tRNA(M-5-U54)-methyltransferase</fullName>
    </alternativeName>
</protein>
<evidence type="ECO:0000255" key="1">
    <source>
        <dbReference type="HAMAP-Rule" id="MF_01037"/>
    </source>
</evidence>
<sequence>MNVLVIGAGLAGSEAAWQVAQAGLPVTLVEMRPLRRSPAHHSSEFGELVCSNSFGALSSDRAAGLLQEELRRLGSLVISTADHHAVPAGGALAVDRGRYSAALTEALDAHPLVTIERREQQRLPEPGQITVLATGPLTSEPLAEDLRAFTGREDCHFFDAASPIVEGESINLEVAFRASRYDKGDADYINCPMNQEQYLAFREALLTAEQAELKDFEKDSATFFEGCLPIEELARRGEDTMRYGPLKPIGLWDQRWGDVTDRDVRRAKRAYAVVQLRQEDKDGRLWNLVGFQTNLKWGEQKRVLQLIPGLENASFVRFGVMHRNTFLEAPQLLQPTLQFRQRPSLLAAGQITGTEGYAAAVAGGWLAGTNAARIARGDAPIDLPATTMAGALTHFISEAPSGKFQPMPPNFGLLPELPERIRDKRRRYGAYRDRALADLAPFSSAPKVAEATAAAL</sequence>
<proteinExistence type="inferred from homology"/>
<name>TRMFO_SYNR3</name>
<reference key="1">
    <citation type="submission" date="2006-05" db="EMBL/GenBank/DDBJ databases">
        <authorList>
            <consortium name="Genoscope"/>
        </authorList>
    </citation>
    <scope>NUCLEOTIDE SEQUENCE [LARGE SCALE GENOMIC DNA]</scope>
    <source>
        <strain>RCC307</strain>
    </source>
</reference>
<comment type="function">
    <text evidence="1">Catalyzes the folate-dependent formation of 5-methyl-uridine at position 54 (M-5-U54) in all tRNAs.</text>
</comment>
<comment type="catalytic activity">
    <reaction evidence="1">
        <text>uridine(54) in tRNA + (6R)-5,10-methylene-5,6,7,8-tetrahydrofolate + NADH + H(+) = 5-methyluridine(54) in tRNA + (6S)-5,6,7,8-tetrahydrofolate + NAD(+)</text>
        <dbReference type="Rhea" id="RHEA:16873"/>
        <dbReference type="Rhea" id="RHEA-COMP:10167"/>
        <dbReference type="Rhea" id="RHEA-COMP:10193"/>
        <dbReference type="ChEBI" id="CHEBI:15378"/>
        <dbReference type="ChEBI" id="CHEBI:15636"/>
        <dbReference type="ChEBI" id="CHEBI:57453"/>
        <dbReference type="ChEBI" id="CHEBI:57540"/>
        <dbReference type="ChEBI" id="CHEBI:57945"/>
        <dbReference type="ChEBI" id="CHEBI:65315"/>
        <dbReference type="ChEBI" id="CHEBI:74447"/>
        <dbReference type="EC" id="2.1.1.74"/>
    </reaction>
</comment>
<comment type="catalytic activity">
    <reaction evidence="1">
        <text>uridine(54) in tRNA + (6R)-5,10-methylene-5,6,7,8-tetrahydrofolate + NADPH + H(+) = 5-methyluridine(54) in tRNA + (6S)-5,6,7,8-tetrahydrofolate + NADP(+)</text>
        <dbReference type="Rhea" id="RHEA:62372"/>
        <dbReference type="Rhea" id="RHEA-COMP:10167"/>
        <dbReference type="Rhea" id="RHEA-COMP:10193"/>
        <dbReference type="ChEBI" id="CHEBI:15378"/>
        <dbReference type="ChEBI" id="CHEBI:15636"/>
        <dbReference type="ChEBI" id="CHEBI:57453"/>
        <dbReference type="ChEBI" id="CHEBI:57783"/>
        <dbReference type="ChEBI" id="CHEBI:58349"/>
        <dbReference type="ChEBI" id="CHEBI:65315"/>
        <dbReference type="ChEBI" id="CHEBI:74447"/>
        <dbReference type="EC" id="2.1.1.74"/>
    </reaction>
</comment>
<comment type="cofactor">
    <cofactor evidence="1">
        <name>FAD</name>
        <dbReference type="ChEBI" id="CHEBI:57692"/>
    </cofactor>
</comment>
<comment type="subcellular location">
    <subcellularLocation>
        <location evidence="1">Cytoplasm</location>
    </subcellularLocation>
</comment>
<comment type="similarity">
    <text evidence="1">Belongs to the MnmG family. TrmFO subfamily.</text>
</comment>
<organism>
    <name type="scientific">Synechococcus sp. (strain RCC307)</name>
    <dbReference type="NCBI Taxonomy" id="316278"/>
    <lineage>
        <taxon>Bacteria</taxon>
        <taxon>Bacillati</taxon>
        <taxon>Cyanobacteriota</taxon>
        <taxon>Cyanophyceae</taxon>
        <taxon>Synechococcales</taxon>
        <taxon>Synechococcaceae</taxon>
        <taxon>Synechococcus</taxon>
    </lineage>
</organism>
<feature type="chain" id="PRO_0000346410" description="Methylenetetrahydrofolate--tRNA-(uracil-5-)-methyltransferase TrmFO">
    <location>
        <begin position="1"/>
        <end position="456"/>
    </location>
</feature>
<feature type="binding site" evidence="1">
    <location>
        <begin position="7"/>
        <end position="12"/>
    </location>
    <ligand>
        <name>FAD</name>
        <dbReference type="ChEBI" id="CHEBI:57692"/>
    </ligand>
</feature>
<accession>A5GU85</accession>